<feature type="chain" id="PRO_0000424427" description="Transposon Tf2-5 polyprotein">
    <location>
        <begin position="1"/>
        <end position="1333"/>
    </location>
</feature>
<feature type="domain" description="Peptidase A2">
    <location>
        <begin position="266"/>
        <end position="342"/>
    </location>
</feature>
<feature type="domain" description="Reverse transcriptase" evidence="2">
    <location>
        <begin position="436"/>
        <end position="615"/>
    </location>
</feature>
<feature type="domain" description="Integrase catalytic" evidence="3">
    <location>
        <begin position="979"/>
        <end position="1138"/>
    </location>
</feature>
<feature type="region of interest" description="Disordered" evidence="5">
    <location>
        <begin position="199"/>
        <end position="231"/>
    </location>
</feature>
<feature type="compositionally biased region" description="Polar residues" evidence="5">
    <location>
        <begin position="218"/>
        <end position="231"/>
    </location>
</feature>
<feature type="active site" description="For protease activity" evidence="4">
    <location>
        <position position="271"/>
    </location>
</feature>
<feature type="binding site" evidence="1">
    <location>
        <position position="502"/>
    </location>
    <ligand>
        <name>Mg(2+)</name>
        <dbReference type="ChEBI" id="CHEBI:18420"/>
        <label>1</label>
        <note>catalytic; for reverse transcriptase activity</note>
    </ligand>
</feature>
<feature type="binding site" evidence="1">
    <location>
        <position position="566"/>
    </location>
    <ligand>
        <name>Mg(2+)</name>
        <dbReference type="ChEBI" id="CHEBI:18420"/>
        <label>1</label>
        <note>catalytic; for reverse transcriptase activity</note>
    </ligand>
</feature>
<feature type="binding site" evidence="1">
    <location>
        <position position="567"/>
    </location>
    <ligand>
        <name>Mg(2+)</name>
        <dbReference type="ChEBI" id="CHEBI:18420"/>
        <label>1</label>
        <note>catalytic; for reverse transcriptase activity</note>
    </ligand>
</feature>
<feature type="binding site" evidence="1">
    <location>
        <position position="990"/>
    </location>
    <ligand>
        <name>Mg(2+)</name>
        <dbReference type="ChEBI" id="CHEBI:18420"/>
        <label>2</label>
        <note>catalytic; for integrase activity</note>
    </ligand>
</feature>
<feature type="binding site" evidence="1">
    <location>
        <position position="1050"/>
    </location>
    <ligand>
        <name>Mg(2+)</name>
        <dbReference type="ChEBI" id="CHEBI:18420"/>
        <label>2</label>
        <note>catalytic; for integrase activity</note>
    </ligand>
</feature>
<dbReference type="EMBL" id="CU329670">
    <property type="protein sequence ID" value="CAD27466.1"/>
    <property type="molecule type" value="Genomic_DNA"/>
</dbReference>
<dbReference type="PIR" id="T38401">
    <property type="entry name" value="T38401"/>
</dbReference>
<dbReference type="RefSeq" id="NP_001018276.1">
    <property type="nucleotide sequence ID" value="NM_001019831.1"/>
</dbReference>
<dbReference type="SMR" id="P0CT38"/>
<dbReference type="FunCoup" id="P0CT38">
    <property type="interactions" value="2"/>
</dbReference>
<dbReference type="STRING" id="284812.P0CT38"/>
<dbReference type="MEROPS" id="A02.051"/>
<dbReference type="EnsemblFungi" id="SPAC27E2.08.1">
    <property type="protein sequence ID" value="SPAC27E2.08.1:pep"/>
    <property type="gene ID" value="SPAC27E2.08"/>
</dbReference>
<dbReference type="EnsemblFungi" id="SPAC2E1P3.03c.1">
    <property type="protein sequence ID" value="SPAC2E1P3.03c.1:pep"/>
    <property type="gene ID" value="SPAC2E1P3.03c"/>
</dbReference>
<dbReference type="EnsemblFungi" id="SPAPB15E9.03c.1">
    <property type="protein sequence ID" value="SPAPB15E9.03c.1:pep"/>
    <property type="gene ID" value="SPAPB15E9.03c"/>
</dbReference>
<dbReference type="EnsemblFungi" id="SPCC1020.14.1">
    <property type="protein sequence ID" value="SPCC1020.14.1:pep"/>
    <property type="gene ID" value="SPCC1020.14"/>
</dbReference>
<dbReference type="GeneID" id="3361422"/>
<dbReference type="KEGG" id="spo:2538755"/>
<dbReference type="KEGG" id="spo:2541833"/>
<dbReference type="KEGG" id="spo:2541991"/>
<dbReference type="KEGG" id="spo:3361422"/>
<dbReference type="PomBase" id="SPAPB15E9.03c">
    <property type="gene designation" value="Tf2-5"/>
</dbReference>
<dbReference type="VEuPathDB" id="FungiDB:SPAC27E2.08"/>
<dbReference type="VEuPathDB" id="FungiDB:SPAC2E1P3.03c"/>
<dbReference type="VEuPathDB" id="FungiDB:SPAPB15E9.03c"/>
<dbReference type="VEuPathDB" id="FungiDB:SPCC1020.14"/>
<dbReference type="HOGENOM" id="CLU_000384_4_0_1"/>
<dbReference type="InParanoid" id="P0CT38"/>
<dbReference type="PRO" id="PR:P0CT38"/>
<dbReference type="Proteomes" id="UP000002485">
    <property type="component" value="Chromosome I"/>
</dbReference>
<dbReference type="GO" id="GO:0005634">
    <property type="term" value="C:nucleus"/>
    <property type="evidence" value="ECO:0007669"/>
    <property type="project" value="UniProtKB-ARBA"/>
</dbReference>
<dbReference type="GO" id="GO:0004190">
    <property type="term" value="F:aspartic-type endopeptidase activity"/>
    <property type="evidence" value="ECO:0007669"/>
    <property type="project" value="UniProtKB-KW"/>
</dbReference>
<dbReference type="GO" id="GO:0003677">
    <property type="term" value="F:DNA binding"/>
    <property type="evidence" value="ECO:0007669"/>
    <property type="project" value="UniProtKB-KW"/>
</dbReference>
<dbReference type="GO" id="GO:0003887">
    <property type="term" value="F:DNA-directed DNA polymerase activity"/>
    <property type="evidence" value="ECO:0007669"/>
    <property type="project" value="UniProtKB-KW"/>
</dbReference>
<dbReference type="GO" id="GO:0004519">
    <property type="term" value="F:endonuclease activity"/>
    <property type="evidence" value="ECO:0007669"/>
    <property type="project" value="UniProtKB-KW"/>
</dbReference>
<dbReference type="GO" id="GO:0046872">
    <property type="term" value="F:metal ion binding"/>
    <property type="evidence" value="ECO:0007669"/>
    <property type="project" value="UniProtKB-KW"/>
</dbReference>
<dbReference type="GO" id="GO:0003723">
    <property type="term" value="F:RNA binding"/>
    <property type="evidence" value="ECO:0007669"/>
    <property type="project" value="UniProtKB-KW"/>
</dbReference>
<dbReference type="GO" id="GO:0003964">
    <property type="term" value="F:RNA-directed DNA polymerase activity"/>
    <property type="evidence" value="ECO:0007669"/>
    <property type="project" value="UniProtKB-KW"/>
</dbReference>
<dbReference type="GO" id="GO:0015074">
    <property type="term" value="P:DNA integration"/>
    <property type="evidence" value="ECO:0007669"/>
    <property type="project" value="UniProtKB-KW"/>
</dbReference>
<dbReference type="GO" id="GO:0006310">
    <property type="term" value="P:DNA recombination"/>
    <property type="evidence" value="ECO:0007669"/>
    <property type="project" value="UniProtKB-KW"/>
</dbReference>
<dbReference type="GO" id="GO:0006508">
    <property type="term" value="P:proteolysis"/>
    <property type="evidence" value="ECO:0007669"/>
    <property type="project" value="UniProtKB-KW"/>
</dbReference>
<dbReference type="CDD" id="cd00303">
    <property type="entry name" value="retropepsin_like"/>
    <property type="match status" value="1"/>
</dbReference>
<dbReference type="CDD" id="cd09274">
    <property type="entry name" value="RNase_HI_RT_Ty3"/>
    <property type="match status" value="1"/>
</dbReference>
<dbReference type="CDD" id="cd01647">
    <property type="entry name" value="RT_LTR"/>
    <property type="match status" value="1"/>
</dbReference>
<dbReference type="FunFam" id="3.10.20.370:FF:000003">
    <property type="entry name" value="Transposon Tf2-6 polyprotein"/>
    <property type="match status" value="1"/>
</dbReference>
<dbReference type="FunFam" id="3.30.70.270:FF:000045">
    <property type="entry name" value="Transposon Tf2-7 polyprotein"/>
    <property type="match status" value="1"/>
</dbReference>
<dbReference type="Gene3D" id="1.10.340.70">
    <property type="match status" value="1"/>
</dbReference>
<dbReference type="Gene3D" id="3.10.20.370">
    <property type="match status" value="1"/>
</dbReference>
<dbReference type="Gene3D" id="3.30.70.270">
    <property type="match status" value="2"/>
</dbReference>
<dbReference type="Gene3D" id="2.40.70.10">
    <property type="entry name" value="Acid Proteases"/>
    <property type="match status" value="1"/>
</dbReference>
<dbReference type="Gene3D" id="3.10.10.10">
    <property type="entry name" value="HIV Type 1 Reverse Transcriptase, subunit A, domain 1"/>
    <property type="match status" value="1"/>
</dbReference>
<dbReference type="Gene3D" id="3.30.420.10">
    <property type="entry name" value="Ribonuclease H-like superfamily/Ribonuclease H"/>
    <property type="match status" value="1"/>
</dbReference>
<dbReference type="InterPro" id="IPR001969">
    <property type="entry name" value="Aspartic_peptidase_AS"/>
</dbReference>
<dbReference type="InterPro" id="IPR043502">
    <property type="entry name" value="DNA/RNA_pol_sf"/>
</dbReference>
<dbReference type="InterPro" id="IPR001584">
    <property type="entry name" value="Integrase_cat-core"/>
</dbReference>
<dbReference type="InterPro" id="IPR041588">
    <property type="entry name" value="Integrase_H2C2"/>
</dbReference>
<dbReference type="InterPro" id="IPR021109">
    <property type="entry name" value="Peptidase_aspartic_dom_sf"/>
</dbReference>
<dbReference type="InterPro" id="IPR050951">
    <property type="entry name" value="Retrovirus_Pol_polyprotein"/>
</dbReference>
<dbReference type="InterPro" id="IPR043128">
    <property type="entry name" value="Rev_trsase/Diguanyl_cyclase"/>
</dbReference>
<dbReference type="InterPro" id="IPR012337">
    <property type="entry name" value="RNaseH-like_sf"/>
</dbReference>
<dbReference type="InterPro" id="IPR036397">
    <property type="entry name" value="RNaseH_sf"/>
</dbReference>
<dbReference type="InterPro" id="IPR000477">
    <property type="entry name" value="RT_dom"/>
</dbReference>
<dbReference type="InterPro" id="IPR041577">
    <property type="entry name" value="RT_RNaseH_2"/>
</dbReference>
<dbReference type="InterPro" id="IPR056924">
    <property type="entry name" value="SH3_Tf2-1"/>
</dbReference>
<dbReference type="InterPro" id="IPR056930">
    <property type="entry name" value="Tf2-1-like_C"/>
</dbReference>
<dbReference type="InterPro" id="IPR024648">
    <property type="entry name" value="Tf2-1-like_dom"/>
</dbReference>
<dbReference type="PANTHER" id="PTHR37984">
    <property type="entry name" value="PROTEIN CBG26694"/>
    <property type="match status" value="1"/>
</dbReference>
<dbReference type="PANTHER" id="PTHR37984:SF5">
    <property type="entry name" value="PROTEIN NYNRIN-LIKE"/>
    <property type="match status" value="1"/>
</dbReference>
<dbReference type="Pfam" id="PF17921">
    <property type="entry name" value="Integrase_H2C2"/>
    <property type="match status" value="1"/>
</dbReference>
<dbReference type="Pfam" id="PF12382">
    <property type="entry name" value="Peptidase_A2_2"/>
    <property type="match status" value="1"/>
</dbReference>
<dbReference type="Pfam" id="PF17919">
    <property type="entry name" value="RT_RNaseH_2"/>
    <property type="match status" value="1"/>
</dbReference>
<dbReference type="Pfam" id="PF00665">
    <property type="entry name" value="rve"/>
    <property type="match status" value="1"/>
</dbReference>
<dbReference type="Pfam" id="PF00078">
    <property type="entry name" value="RVT_1"/>
    <property type="match status" value="1"/>
</dbReference>
<dbReference type="Pfam" id="PF24626">
    <property type="entry name" value="SH3_Tf2-1"/>
    <property type="match status" value="1"/>
</dbReference>
<dbReference type="Pfam" id="PF24614">
    <property type="entry name" value="Tf2-1_C"/>
    <property type="match status" value="1"/>
</dbReference>
<dbReference type="SUPFAM" id="SSF50630">
    <property type="entry name" value="Acid proteases"/>
    <property type="match status" value="1"/>
</dbReference>
<dbReference type="SUPFAM" id="SSF56672">
    <property type="entry name" value="DNA/RNA polymerases"/>
    <property type="match status" value="1"/>
</dbReference>
<dbReference type="SUPFAM" id="SSF53098">
    <property type="entry name" value="Ribonuclease H-like"/>
    <property type="match status" value="1"/>
</dbReference>
<dbReference type="PROSITE" id="PS00141">
    <property type="entry name" value="ASP_PROTEASE"/>
    <property type="match status" value="1"/>
</dbReference>
<dbReference type="PROSITE" id="PS50994">
    <property type="entry name" value="INTEGRASE"/>
    <property type="match status" value="1"/>
</dbReference>
<dbReference type="PROSITE" id="PS50878">
    <property type="entry name" value="RT_POL"/>
    <property type="match status" value="1"/>
</dbReference>
<sequence>MSYANYRYMKARAKRWRPENLDGIQTSDEHLINLFAKILSKHVPEIGKFDPNKDVESYISKLDQHFTEYPSLFPNEHTKRQYTLNHLEELEQQFAERMFSENGSLTWQELLRQTGKVQGSNKGDRLTKTFEGFRNQLDKVQFIRKLMSKANVDDFHTRLFILWMLPYSLRKLKERNYWKSEISEIYDFLEDKRTASYGKTHKRFQPQNKNLGKESLSKKNNTTNSRNLRKTNVSRIEYSSNKFLNHTRKRYEMVLQAELPDFKCSIPCLIDTGAQANIITEETVRAHKLPTRPWSKSVIYGGVYPNKINRKTIKLNISLNGISIKTEFLVVKKFSHPAAISFTTLYDNNIEISSSKHTLSQMNKVSNIVKEPELPDIYKEFKDITAETNTEKLPKPIKGLEFEVELTQENYRLPIRNYPLPPGKMQAMNDEINQGLKSGIIRESKAINACPVMFVPKKEGTLRMVVDYKPLNKYVKPNIYPLPLIEQLLAKIQGSTIFTKLDLKSAYHLIRVRKGDEHKLAFRCPRGVFEYLVMPYGISTAPAHFQYFINTILGEAKESHVVCYMDDILIHSKSESEHVKHVKDVLQKLKNANLIINQAKCEFHQSQVKFIGYHISEKGFTPCQENIDKVLQWKQPKNRKELRQFLGSVNYLRKFIPKTSQLTHPLNNLLKKDVRWKWTPTQTQAIENIKQCLVSPPVLRHFDFSKKILLETDASDVAVGAVLSQKHDDDKYYPVGYYSAKMSKAQLNYSVSDKEMLAIIKSLKHWRHYLESTIEPFKILTDHRNLIGRITNESEPENKRLARWQLFLQDFNFEINYRPGSANHIADALSRIVDETEPIPKDSEDNSINFVNQISITDDFKNQVVTEYTNDTKLLNLLNNEDKRVEENIQLKDGLLINSKDQILLPNDTQLTRTIIKKYHEEGKLIHPGIELLTNIILRRFTWKGIRKQIQEYVQNCHTCQINKSRNHKPYGPLQPIPPSERPWESLSMDFITALPESSGYNALFVVVDRFSKMAILVPCTKSITAEQTARMFDQRVIAYFGNPKEIIADNDHIFTSQTWKDFAHKYNFVMKFSLPYRPQTDGQTERTNQTVEKLLRCVCSTHPNTWVDHISLVQQSYNNAIHSATQMTPFEIVHRYSPALSPLELPSFSDKTDENSQETIQVFQTVKEHLNTNNIKMKKYFDMKIQEIEEFQPGDLVMVKRTKTGFLHKSNKLAPSFAGPFYVLQKSGPNNYELDLPDSIKHMFSSTFHVSHLEKYRHNSELNYATIDESDIGTILHILEHKNREQVLYLNVKYISNLNPSTIMSGWTTLATALQADKAIVNDYIKNNNLNI</sequence>
<evidence type="ECO:0000250" key="1"/>
<evidence type="ECO:0000255" key="2">
    <source>
        <dbReference type="PROSITE-ProRule" id="PRU00405"/>
    </source>
</evidence>
<evidence type="ECO:0000255" key="3">
    <source>
        <dbReference type="PROSITE-ProRule" id="PRU00457"/>
    </source>
</evidence>
<evidence type="ECO:0000255" key="4">
    <source>
        <dbReference type="PROSITE-ProRule" id="PRU10094"/>
    </source>
</evidence>
<evidence type="ECO:0000256" key="5">
    <source>
        <dbReference type="SAM" id="MobiDB-lite"/>
    </source>
</evidence>
<comment type="PTM">
    <text evidence="1">Processing of the polyproteins proceeds by an ordered pathway, called maturation. It involves the initial cleavage of a 27 kDa capsid protein (CA) from the N-terminus of the polyprotein, followed by the cleavage of a 56 kDa integrase (IN) from the C-terminus. This leaves a 72 kDa protease-reverse transcriptase fusion protein (PR-RT), which does not seem to be processed further (By similarity).</text>
</comment>
<comment type="miscellaneous">
    <text>Retrotransposons are mobile genetic entities that are able to replicate via an RNA intermediate and a reverse transcription step. In contrast to retroviruses, retrotransposons are non-infectious, lack an envelope and remain intracellular. Tf2 retrotransposons belong to the gypsy-like elements (metaviridae).</text>
</comment>
<protein>
    <recommendedName>
        <fullName>Transposon Tf2-5 polyprotein</fullName>
    </recommendedName>
    <alternativeName>
        <fullName>Retrotransposable element Tf2 155 kDa protein</fullName>
    </alternativeName>
</protein>
<proteinExistence type="inferred from homology"/>
<keyword id="KW-0064">Aspartyl protease</keyword>
<keyword id="KW-0229">DNA integration</keyword>
<keyword id="KW-0233">DNA recombination</keyword>
<keyword id="KW-0238">DNA-binding</keyword>
<keyword id="KW-0239">DNA-directed DNA polymerase</keyword>
<keyword id="KW-0255">Endonuclease</keyword>
<keyword id="KW-0378">Hydrolase</keyword>
<keyword id="KW-0460">Magnesium</keyword>
<keyword id="KW-0479">Metal-binding</keyword>
<keyword id="KW-0511">Multifunctional enzyme</keyword>
<keyword id="KW-0540">Nuclease</keyword>
<keyword id="KW-0548">Nucleotidyltransferase</keyword>
<keyword id="KW-0645">Protease</keyword>
<keyword id="KW-1185">Reference proteome</keyword>
<keyword id="KW-0694">RNA-binding</keyword>
<keyword id="KW-0695">RNA-directed DNA polymerase</keyword>
<keyword id="KW-0808">Transferase</keyword>
<keyword id="KW-0814">Transposable element</keyword>
<reference key="1">
    <citation type="journal article" date="2002" name="Nature">
        <title>The genome sequence of Schizosaccharomyces pombe.</title>
        <authorList>
            <person name="Wood V."/>
            <person name="Gwilliam R."/>
            <person name="Rajandream M.A."/>
            <person name="Lyne M.H."/>
            <person name="Lyne R."/>
            <person name="Stewart A."/>
            <person name="Sgouros J.G."/>
            <person name="Peat N."/>
            <person name="Hayles J."/>
            <person name="Baker S.G."/>
            <person name="Basham D."/>
            <person name="Bowman S."/>
            <person name="Brooks K."/>
            <person name="Brown D."/>
            <person name="Brown S."/>
            <person name="Chillingworth T."/>
            <person name="Churcher C.M."/>
            <person name="Collins M."/>
            <person name="Connor R."/>
            <person name="Cronin A."/>
            <person name="Davis P."/>
            <person name="Feltwell T."/>
            <person name="Fraser A."/>
            <person name="Gentles S."/>
            <person name="Goble A."/>
            <person name="Hamlin N."/>
            <person name="Harris D.E."/>
            <person name="Hidalgo J."/>
            <person name="Hodgson G."/>
            <person name="Holroyd S."/>
            <person name="Hornsby T."/>
            <person name="Howarth S."/>
            <person name="Huckle E.J."/>
            <person name="Hunt S."/>
            <person name="Jagels K."/>
            <person name="James K.D."/>
            <person name="Jones L."/>
            <person name="Jones M."/>
            <person name="Leather S."/>
            <person name="McDonald S."/>
            <person name="McLean J."/>
            <person name="Mooney P."/>
            <person name="Moule S."/>
            <person name="Mungall K.L."/>
            <person name="Murphy L.D."/>
            <person name="Niblett D."/>
            <person name="Odell C."/>
            <person name="Oliver K."/>
            <person name="O'Neil S."/>
            <person name="Pearson D."/>
            <person name="Quail M.A."/>
            <person name="Rabbinowitsch E."/>
            <person name="Rutherford K.M."/>
            <person name="Rutter S."/>
            <person name="Saunders D."/>
            <person name="Seeger K."/>
            <person name="Sharp S."/>
            <person name="Skelton J."/>
            <person name="Simmonds M.N."/>
            <person name="Squares R."/>
            <person name="Squares S."/>
            <person name="Stevens K."/>
            <person name="Taylor K."/>
            <person name="Taylor R.G."/>
            <person name="Tivey A."/>
            <person name="Walsh S.V."/>
            <person name="Warren T."/>
            <person name="Whitehead S."/>
            <person name="Woodward J.R."/>
            <person name="Volckaert G."/>
            <person name="Aert R."/>
            <person name="Robben J."/>
            <person name="Grymonprez B."/>
            <person name="Weltjens I."/>
            <person name="Vanstreels E."/>
            <person name="Rieger M."/>
            <person name="Schaefer M."/>
            <person name="Mueller-Auer S."/>
            <person name="Gabel C."/>
            <person name="Fuchs M."/>
            <person name="Duesterhoeft A."/>
            <person name="Fritzc C."/>
            <person name="Holzer E."/>
            <person name="Moestl D."/>
            <person name="Hilbert H."/>
            <person name="Borzym K."/>
            <person name="Langer I."/>
            <person name="Beck A."/>
            <person name="Lehrach H."/>
            <person name="Reinhardt R."/>
            <person name="Pohl T.M."/>
            <person name="Eger P."/>
            <person name="Zimmermann W."/>
            <person name="Wedler H."/>
            <person name="Wambutt R."/>
            <person name="Purnelle B."/>
            <person name="Goffeau A."/>
            <person name="Cadieu E."/>
            <person name="Dreano S."/>
            <person name="Gloux S."/>
            <person name="Lelaure V."/>
            <person name="Mottier S."/>
            <person name="Galibert F."/>
            <person name="Aves S.J."/>
            <person name="Xiang Z."/>
            <person name="Hunt C."/>
            <person name="Moore K."/>
            <person name="Hurst S.M."/>
            <person name="Lucas M."/>
            <person name="Rochet M."/>
            <person name="Gaillardin C."/>
            <person name="Tallada V.A."/>
            <person name="Garzon A."/>
            <person name="Thode G."/>
            <person name="Daga R.R."/>
            <person name="Cruzado L."/>
            <person name="Jimenez J."/>
            <person name="Sanchez M."/>
            <person name="del Rey F."/>
            <person name="Benito J."/>
            <person name="Dominguez A."/>
            <person name="Revuelta J.L."/>
            <person name="Moreno S."/>
            <person name="Armstrong J."/>
            <person name="Forsburg S.L."/>
            <person name="Cerutti L."/>
            <person name="Lowe T."/>
            <person name="McCombie W.R."/>
            <person name="Paulsen I."/>
            <person name="Potashkin J."/>
            <person name="Shpakovski G.V."/>
            <person name="Ussery D."/>
            <person name="Barrell B.G."/>
            <person name="Nurse P."/>
        </authorList>
    </citation>
    <scope>NUCLEOTIDE SEQUENCE [LARGE SCALE GENOMIC DNA]</scope>
    <source>
        <strain>972 / ATCC 24843</strain>
    </source>
</reference>
<reference key="2">
    <citation type="journal article" date="2003" name="Genome Res.">
        <title>Retrotransposons and their recognition of pol II promoters: a comprehensive survey of the transposable elements from the complete genome sequence of Schizosaccharomyces pombe.</title>
        <authorList>
            <person name="Bowen N.J."/>
            <person name="Jordan I.K."/>
            <person name="Epstein J.A."/>
            <person name="Wood V."/>
            <person name="Levin H.L."/>
        </authorList>
    </citation>
    <scope>NOMENCLATURE</scope>
</reference>
<gene>
    <name type="primary">Tf2-5</name>
    <name type="ORF">SPAPB15E9.03c</name>
</gene>
<organism>
    <name type="scientific">Schizosaccharomyces pombe (strain 972 / ATCC 24843)</name>
    <name type="common">Fission yeast</name>
    <dbReference type="NCBI Taxonomy" id="284812"/>
    <lineage>
        <taxon>Eukaryota</taxon>
        <taxon>Fungi</taxon>
        <taxon>Dikarya</taxon>
        <taxon>Ascomycota</taxon>
        <taxon>Taphrinomycotina</taxon>
        <taxon>Schizosaccharomycetes</taxon>
        <taxon>Schizosaccharomycetales</taxon>
        <taxon>Schizosaccharomycetaceae</taxon>
        <taxon>Schizosaccharomyces</taxon>
    </lineage>
</organism>
<name>TF25_SCHPO</name>
<accession>P0CT38</accession>
<accession>Q05654</accession>
<accession>Q96TJ6</accession>